<dbReference type="EMBL" id="CP000539">
    <property type="protein sequence ID" value="ABM42495.1"/>
    <property type="molecule type" value="Genomic_DNA"/>
</dbReference>
<dbReference type="SMR" id="A1W8C0"/>
<dbReference type="STRING" id="232721.Ajs_2334"/>
<dbReference type="KEGG" id="ajs:Ajs_2334"/>
<dbReference type="eggNOG" id="COG1495">
    <property type="taxonomic scope" value="Bacteria"/>
</dbReference>
<dbReference type="HOGENOM" id="CLU_098660_1_0_4"/>
<dbReference type="Proteomes" id="UP000000645">
    <property type="component" value="Chromosome"/>
</dbReference>
<dbReference type="GO" id="GO:0005886">
    <property type="term" value="C:plasma membrane"/>
    <property type="evidence" value="ECO:0007669"/>
    <property type="project" value="UniProtKB-SubCell"/>
</dbReference>
<dbReference type="GO" id="GO:0009055">
    <property type="term" value="F:electron transfer activity"/>
    <property type="evidence" value="ECO:0007669"/>
    <property type="project" value="UniProtKB-UniRule"/>
</dbReference>
<dbReference type="GO" id="GO:0015035">
    <property type="term" value="F:protein-disulfide reductase activity"/>
    <property type="evidence" value="ECO:0007669"/>
    <property type="project" value="UniProtKB-UniRule"/>
</dbReference>
<dbReference type="GO" id="GO:0006457">
    <property type="term" value="P:protein folding"/>
    <property type="evidence" value="ECO:0007669"/>
    <property type="project" value="InterPro"/>
</dbReference>
<dbReference type="Gene3D" id="1.20.1550.10">
    <property type="entry name" value="DsbB-like"/>
    <property type="match status" value="1"/>
</dbReference>
<dbReference type="HAMAP" id="MF_00286">
    <property type="entry name" value="DsbB"/>
    <property type="match status" value="1"/>
</dbReference>
<dbReference type="InterPro" id="IPR003752">
    <property type="entry name" value="DiS_bond_form_DsbB/BdbC"/>
</dbReference>
<dbReference type="InterPro" id="IPR022920">
    <property type="entry name" value="Disulphide_bond_form_DsbB"/>
</dbReference>
<dbReference type="InterPro" id="IPR050183">
    <property type="entry name" value="DsbB"/>
</dbReference>
<dbReference type="InterPro" id="IPR023380">
    <property type="entry name" value="DsbB-like_sf"/>
</dbReference>
<dbReference type="PANTHER" id="PTHR36570">
    <property type="entry name" value="DISULFIDE BOND FORMATION PROTEIN B"/>
    <property type="match status" value="1"/>
</dbReference>
<dbReference type="PANTHER" id="PTHR36570:SF3">
    <property type="entry name" value="DISULFIDE BOND FORMATION PROTEIN B"/>
    <property type="match status" value="1"/>
</dbReference>
<dbReference type="Pfam" id="PF02600">
    <property type="entry name" value="DsbB"/>
    <property type="match status" value="1"/>
</dbReference>
<dbReference type="SUPFAM" id="SSF158442">
    <property type="entry name" value="DsbB-like"/>
    <property type="match status" value="1"/>
</dbReference>
<organism>
    <name type="scientific">Acidovorax sp. (strain JS42)</name>
    <dbReference type="NCBI Taxonomy" id="232721"/>
    <lineage>
        <taxon>Bacteria</taxon>
        <taxon>Pseudomonadati</taxon>
        <taxon>Pseudomonadota</taxon>
        <taxon>Betaproteobacteria</taxon>
        <taxon>Burkholderiales</taxon>
        <taxon>Comamonadaceae</taxon>
        <taxon>Acidovorax</taxon>
    </lineage>
</organism>
<proteinExistence type="inferred from homology"/>
<comment type="function">
    <text evidence="1">Required for disulfide bond formation in some periplasmic proteins. Acts by oxidizing the DsbA protein.</text>
</comment>
<comment type="subcellular location">
    <subcellularLocation>
        <location evidence="1">Cell inner membrane</location>
        <topology evidence="1">Multi-pass membrane protein</topology>
    </subcellularLocation>
</comment>
<comment type="similarity">
    <text evidence="1">Belongs to the DsbB family.</text>
</comment>
<accession>A1W8C0</accession>
<evidence type="ECO:0000255" key="1">
    <source>
        <dbReference type="HAMAP-Rule" id="MF_00286"/>
    </source>
</evidence>
<sequence>MLNWIDTAPRRILALISAACVAMLAFGMYLQHVVGLEPCPMCIVQRYALIGVAVFAGLASARGQKGWWMTWSVLALVAAGFGAFVAARQSWLQWYPPEIATCGRDFYGMIENYPISRAIPMIFRGSGDCTAVDWTFLGGSIANWSFVWFLLFAVLLLVLLVRGGRGAPDTLARA</sequence>
<keyword id="KW-0997">Cell inner membrane</keyword>
<keyword id="KW-1003">Cell membrane</keyword>
<keyword id="KW-0143">Chaperone</keyword>
<keyword id="KW-1015">Disulfide bond</keyword>
<keyword id="KW-0249">Electron transport</keyword>
<keyword id="KW-0472">Membrane</keyword>
<keyword id="KW-0560">Oxidoreductase</keyword>
<keyword id="KW-0676">Redox-active center</keyword>
<keyword id="KW-0812">Transmembrane</keyword>
<keyword id="KW-1133">Transmembrane helix</keyword>
<keyword id="KW-0813">Transport</keyword>
<name>DSBB_ACISJ</name>
<feature type="chain" id="PRO_0000298330" description="Disulfide bond formation protein B">
    <location>
        <begin position="1"/>
        <end position="174"/>
    </location>
</feature>
<feature type="topological domain" description="Cytoplasmic" evidence="1">
    <location>
        <begin position="1"/>
        <end position="12"/>
    </location>
</feature>
<feature type="transmembrane region" description="Helical" evidence="1">
    <location>
        <begin position="13"/>
        <end position="29"/>
    </location>
</feature>
<feature type="topological domain" description="Periplasmic" evidence="1">
    <location>
        <begin position="30"/>
        <end position="47"/>
    </location>
</feature>
<feature type="transmembrane region" description="Helical" evidence="1">
    <location>
        <begin position="48"/>
        <end position="64"/>
    </location>
</feature>
<feature type="topological domain" description="Cytoplasmic" evidence="1">
    <location>
        <begin position="65"/>
        <end position="69"/>
    </location>
</feature>
<feature type="transmembrane region" description="Helical" evidence="1">
    <location>
        <begin position="70"/>
        <end position="87"/>
    </location>
</feature>
<feature type="topological domain" description="Periplasmic" evidence="1">
    <location>
        <begin position="88"/>
        <end position="143"/>
    </location>
</feature>
<feature type="transmembrane region" description="Helical" evidence="1">
    <location>
        <begin position="144"/>
        <end position="162"/>
    </location>
</feature>
<feature type="topological domain" description="Cytoplasmic" evidence="1">
    <location>
        <begin position="163"/>
        <end position="174"/>
    </location>
</feature>
<feature type="disulfide bond" description="Redox-active" evidence="1">
    <location>
        <begin position="39"/>
        <end position="42"/>
    </location>
</feature>
<feature type="disulfide bond" description="Redox-active" evidence="1">
    <location>
        <begin position="102"/>
        <end position="129"/>
    </location>
</feature>
<gene>
    <name evidence="1" type="primary">dsbB</name>
    <name type="ordered locus">Ajs_2334</name>
</gene>
<reference key="1">
    <citation type="submission" date="2006-12" db="EMBL/GenBank/DDBJ databases">
        <title>Complete sequence of chromosome 1 of Acidovorax sp. JS42.</title>
        <authorList>
            <person name="Copeland A."/>
            <person name="Lucas S."/>
            <person name="Lapidus A."/>
            <person name="Barry K."/>
            <person name="Detter J.C."/>
            <person name="Glavina del Rio T."/>
            <person name="Dalin E."/>
            <person name="Tice H."/>
            <person name="Pitluck S."/>
            <person name="Chertkov O."/>
            <person name="Brettin T."/>
            <person name="Bruce D."/>
            <person name="Han C."/>
            <person name="Tapia R."/>
            <person name="Gilna P."/>
            <person name="Schmutz J."/>
            <person name="Larimer F."/>
            <person name="Land M."/>
            <person name="Hauser L."/>
            <person name="Kyrpides N."/>
            <person name="Kim E."/>
            <person name="Stahl D."/>
            <person name="Richardson P."/>
        </authorList>
    </citation>
    <scope>NUCLEOTIDE SEQUENCE [LARGE SCALE GENOMIC DNA]</scope>
    <source>
        <strain>JS42</strain>
    </source>
</reference>
<protein>
    <recommendedName>
        <fullName evidence="1">Disulfide bond formation protein B</fullName>
    </recommendedName>
    <alternativeName>
        <fullName evidence="1">Disulfide oxidoreductase</fullName>
    </alternativeName>
</protein>